<dbReference type="EC" id="2.4.2.21" evidence="1"/>
<dbReference type="EMBL" id="CP001150">
    <property type="protein sequence ID" value="ACM00602.1"/>
    <property type="molecule type" value="Genomic_DNA"/>
</dbReference>
<dbReference type="RefSeq" id="WP_012643930.1">
    <property type="nucleotide sequence ID" value="NC_011963.1"/>
</dbReference>
<dbReference type="SMR" id="B9KQ95"/>
<dbReference type="GeneID" id="67446188"/>
<dbReference type="KEGG" id="rsk:RSKD131_0742"/>
<dbReference type="HOGENOM" id="CLU_002982_0_1_5"/>
<dbReference type="UniPathway" id="UPA00061">
    <property type="reaction ID" value="UER00516"/>
</dbReference>
<dbReference type="GO" id="GO:0008939">
    <property type="term" value="F:nicotinate-nucleotide-dimethylbenzimidazole phosphoribosyltransferase activity"/>
    <property type="evidence" value="ECO:0007669"/>
    <property type="project" value="UniProtKB-UniRule"/>
</dbReference>
<dbReference type="GO" id="GO:0009236">
    <property type="term" value="P:cobalamin biosynthetic process"/>
    <property type="evidence" value="ECO:0007669"/>
    <property type="project" value="UniProtKB-KW"/>
</dbReference>
<dbReference type="CDD" id="cd02439">
    <property type="entry name" value="DMB-PRT_CobT"/>
    <property type="match status" value="1"/>
</dbReference>
<dbReference type="Gene3D" id="1.10.1610.10">
    <property type="match status" value="1"/>
</dbReference>
<dbReference type="Gene3D" id="3.40.50.10210">
    <property type="match status" value="1"/>
</dbReference>
<dbReference type="HAMAP" id="MF_00230">
    <property type="entry name" value="CobT"/>
    <property type="match status" value="1"/>
</dbReference>
<dbReference type="InterPro" id="IPR003200">
    <property type="entry name" value="Nict_dMeBzImd_PRibTrfase"/>
</dbReference>
<dbReference type="InterPro" id="IPR017846">
    <property type="entry name" value="Nict_dMeBzImd_PRibTrfase_bact"/>
</dbReference>
<dbReference type="InterPro" id="IPR023195">
    <property type="entry name" value="Nict_dMeBzImd_PRibTrfase_N"/>
</dbReference>
<dbReference type="InterPro" id="IPR036087">
    <property type="entry name" value="Nict_dMeBzImd_PRibTrfase_sf"/>
</dbReference>
<dbReference type="NCBIfam" id="TIGR03160">
    <property type="entry name" value="cobT_DBIPRT"/>
    <property type="match status" value="1"/>
</dbReference>
<dbReference type="NCBIfam" id="NF000996">
    <property type="entry name" value="PRK00105.1"/>
    <property type="match status" value="1"/>
</dbReference>
<dbReference type="PANTHER" id="PTHR43463">
    <property type="entry name" value="NICOTINATE-NUCLEOTIDE--DIMETHYLBENZIMIDAZOLE PHOSPHORIBOSYLTRANSFERASE"/>
    <property type="match status" value="1"/>
</dbReference>
<dbReference type="PANTHER" id="PTHR43463:SF1">
    <property type="entry name" value="NICOTINATE-NUCLEOTIDE--DIMETHYLBENZIMIDAZOLE PHOSPHORIBOSYLTRANSFERASE"/>
    <property type="match status" value="1"/>
</dbReference>
<dbReference type="Pfam" id="PF02277">
    <property type="entry name" value="DBI_PRT"/>
    <property type="match status" value="1"/>
</dbReference>
<dbReference type="SUPFAM" id="SSF52733">
    <property type="entry name" value="Nicotinate mononucleotide:5,6-dimethylbenzimidazole phosphoribosyltransferase (CobT)"/>
    <property type="match status" value="1"/>
</dbReference>
<feature type="chain" id="PRO_1000125112" description="Nicotinate-nucleotide--dimethylbenzimidazole phosphoribosyltransferase">
    <location>
        <begin position="1"/>
        <end position="338"/>
    </location>
</feature>
<feature type="active site" description="Proton acceptor" evidence="1">
    <location>
        <position position="306"/>
    </location>
</feature>
<accession>B9KQ95</accession>
<evidence type="ECO:0000255" key="1">
    <source>
        <dbReference type="HAMAP-Rule" id="MF_00230"/>
    </source>
</evidence>
<reference key="1">
    <citation type="journal article" date="2009" name="J. Bacteriol.">
        <title>Complete genome sequence of Rhodobacter sphaeroides KD131.</title>
        <authorList>
            <person name="Lim S.-K."/>
            <person name="Kim S.J."/>
            <person name="Cha S.H."/>
            <person name="Oh Y.-K."/>
            <person name="Rhee H.-J."/>
            <person name="Kim M.-S."/>
            <person name="Lee J.K."/>
        </authorList>
    </citation>
    <scope>NUCLEOTIDE SEQUENCE [LARGE SCALE GENOMIC DNA]</scope>
    <source>
        <strain>KD131 / KCTC 12085</strain>
    </source>
</reference>
<name>COBT_CERSK</name>
<protein>
    <recommendedName>
        <fullName evidence="1">Nicotinate-nucleotide--dimethylbenzimidazole phosphoribosyltransferase</fullName>
        <shortName evidence="1">NN:DBI PRT</shortName>
        <ecNumber evidence="1">2.4.2.21</ecNumber>
    </recommendedName>
    <alternativeName>
        <fullName evidence="1">N(1)-alpha-phosphoribosyltransferase</fullName>
    </alternativeName>
</protein>
<proteinExistence type="inferred from homology"/>
<gene>
    <name evidence="1" type="primary">cobT</name>
    <name type="ordered locus">RSKD131_0742</name>
</gene>
<organism>
    <name type="scientific">Cereibacter sphaeroides (strain KD131 / KCTC 12085)</name>
    <name type="common">Rhodobacter sphaeroides</name>
    <dbReference type="NCBI Taxonomy" id="557760"/>
    <lineage>
        <taxon>Bacteria</taxon>
        <taxon>Pseudomonadati</taxon>
        <taxon>Pseudomonadota</taxon>
        <taxon>Alphaproteobacteria</taxon>
        <taxon>Rhodobacterales</taxon>
        <taxon>Paracoccaceae</taxon>
        <taxon>Cereibacter</taxon>
    </lineage>
</organism>
<keyword id="KW-0169">Cobalamin biosynthesis</keyword>
<keyword id="KW-0328">Glycosyltransferase</keyword>
<keyword id="KW-0808">Transferase</keyword>
<sequence>MKAPFTSLAGFRAVFETLPQVDAEAVEAATARNETLTKPKGALGRLEDLAIWYAGWIGDGRPALERPQVAIFAGNHGIAARGVSAFPPEVTVQMVANYRAGGAAVNQLCHVAGASMTVTELELDRPTLDFTVSPAMTEDELVAALAAGWEAVDDESDLLVVGEMGIGNTTAAAAIAAALFGGTAAEWTGRGSGVAGSALEAKTRVVAEGLERHGDALSDPLEVLRCLGGREIAAMAGAIARARVGRTPVILDGFICTSAAAVLHALTPSALDHAIAGHVSAEGAHPAALARIGKEPLLDLGMRLGEGTGAIVAINILRSAVACLSGMATFAEAGVSGG</sequence>
<comment type="function">
    <text evidence="1">Catalyzes the synthesis of alpha-ribazole-5'-phosphate from nicotinate mononucleotide (NAMN) and 5,6-dimethylbenzimidazole (DMB).</text>
</comment>
<comment type="catalytic activity">
    <reaction evidence="1">
        <text>5,6-dimethylbenzimidazole + nicotinate beta-D-ribonucleotide = alpha-ribazole 5'-phosphate + nicotinate + H(+)</text>
        <dbReference type="Rhea" id="RHEA:11196"/>
        <dbReference type="ChEBI" id="CHEBI:15378"/>
        <dbReference type="ChEBI" id="CHEBI:15890"/>
        <dbReference type="ChEBI" id="CHEBI:32544"/>
        <dbReference type="ChEBI" id="CHEBI:57502"/>
        <dbReference type="ChEBI" id="CHEBI:57918"/>
        <dbReference type="EC" id="2.4.2.21"/>
    </reaction>
</comment>
<comment type="pathway">
    <text evidence="1">Nucleoside biosynthesis; alpha-ribazole biosynthesis; alpha-ribazole from 5,6-dimethylbenzimidazole: step 1/2.</text>
</comment>
<comment type="similarity">
    <text evidence="1">Belongs to the CobT family.</text>
</comment>